<evidence type="ECO:0000255" key="1">
    <source>
        <dbReference type="HAMAP-Rule" id="MF_00044"/>
    </source>
</evidence>
<comment type="function">
    <text evidence="1">Catalyzes the attachment of L-aspartate to tRNA(Asp) in a two-step reaction: L-aspartate is first activated by ATP to form Asp-AMP and then transferred to the acceptor end of tRNA(Asp).</text>
</comment>
<comment type="catalytic activity">
    <reaction evidence="1">
        <text>tRNA(Asp) + L-aspartate + ATP = L-aspartyl-tRNA(Asp) + AMP + diphosphate</text>
        <dbReference type="Rhea" id="RHEA:19649"/>
        <dbReference type="Rhea" id="RHEA-COMP:9660"/>
        <dbReference type="Rhea" id="RHEA-COMP:9678"/>
        <dbReference type="ChEBI" id="CHEBI:29991"/>
        <dbReference type="ChEBI" id="CHEBI:30616"/>
        <dbReference type="ChEBI" id="CHEBI:33019"/>
        <dbReference type="ChEBI" id="CHEBI:78442"/>
        <dbReference type="ChEBI" id="CHEBI:78516"/>
        <dbReference type="ChEBI" id="CHEBI:456215"/>
        <dbReference type="EC" id="6.1.1.12"/>
    </reaction>
</comment>
<comment type="subunit">
    <text evidence="1">Homodimer.</text>
</comment>
<comment type="subcellular location">
    <subcellularLocation>
        <location evidence="1">Cytoplasm</location>
    </subcellularLocation>
</comment>
<comment type="similarity">
    <text evidence="1">Belongs to the class-II aminoacyl-tRNA synthetase family. Type 1 subfamily.</text>
</comment>
<sequence length="581" mass="66506">MYRTHTCGELNIKDVGKKVVLSGWVDRIRDLGGIKFIILRDRYGVTQVVVNPESPAYEISQKIGREWVIQIEGTVSERPESTKTETQTGEIEVIVEKINVLSKAELPPFYPGDKVSEDLRLKYRYLDLRDKNMNKNLIIRHKMAQAAREFLNKHGFLEIETPYLTKSTPEGARDFLVPSRLQKGKFYALPQSPQLFKQLLMVSGFDKYYQFARCFRDEDLRADRQPEFTQIDIEMSFVEMEDVINLMENFVRYVYSSVGIKLPEKFDRITYDEAMEIYGSDKPDRRFGMELKDLTNYFKDTDFKIIKNVINNGGSIKGFITQIPISRKIASELESYVKEFGLGGLLWFKLENGEISSPTNKFLGGSYENISKDYNLKDGDVVLLAAHTNREQLNTALGALRLRIAKEHFKNLEEGFDALWVVDFPFLEWNEEEKRYVARHHPFTMPKNIDSKPEDIKAYAYDMILNGNEIGGGSIRIHNSEIQRKVFEIIGLTNKEAEEKFGFLLEALKYGAPPHGGIAFGFDRMVSIALRTSSIRDVIAFPKTTSGTCQLTGAPSSVDKSQLEELSIKLFDIKEGGDENE</sequence>
<reference key="1">
    <citation type="journal article" date="2009" name="J. Bacteriol.">
        <title>The genome of Thermosipho africanus TCF52B: lateral genetic connections to the Firmicutes and Archaea.</title>
        <authorList>
            <person name="Nesboe C.L."/>
            <person name="Bapteste E."/>
            <person name="Curtis B."/>
            <person name="Dahle H."/>
            <person name="Lopez P."/>
            <person name="Macleod D."/>
            <person name="Dlutek M."/>
            <person name="Bowman S."/>
            <person name="Zhaxybayeva O."/>
            <person name="Birkeland N.-K."/>
            <person name="Doolittle W.F."/>
        </authorList>
    </citation>
    <scope>NUCLEOTIDE SEQUENCE [LARGE SCALE GENOMIC DNA]</scope>
    <source>
        <strain>TCF52B</strain>
    </source>
</reference>
<accession>B7IE30</accession>
<organism>
    <name type="scientific">Thermosipho africanus (strain TCF52B)</name>
    <dbReference type="NCBI Taxonomy" id="484019"/>
    <lineage>
        <taxon>Bacteria</taxon>
        <taxon>Thermotogati</taxon>
        <taxon>Thermotogota</taxon>
        <taxon>Thermotogae</taxon>
        <taxon>Thermotogales</taxon>
        <taxon>Fervidobacteriaceae</taxon>
        <taxon>Thermosipho</taxon>
    </lineage>
</organism>
<name>SYD_THEAB</name>
<gene>
    <name evidence="1" type="primary">aspS</name>
    <name type="ordered locus">THA_1826</name>
</gene>
<keyword id="KW-0030">Aminoacyl-tRNA synthetase</keyword>
<keyword id="KW-0067">ATP-binding</keyword>
<keyword id="KW-0963">Cytoplasm</keyword>
<keyword id="KW-0436">Ligase</keyword>
<keyword id="KW-0547">Nucleotide-binding</keyword>
<keyword id="KW-0648">Protein biosynthesis</keyword>
<keyword id="KW-1185">Reference proteome</keyword>
<dbReference type="EC" id="6.1.1.12" evidence="1"/>
<dbReference type="EMBL" id="CP001185">
    <property type="protein sequence ID" value="ACJ76257.1"/>
    <property type="molecule type" value="Genomic_DNA"/>
</dbReference>
<dbReference type="RefSeq" id="WP_004102774.1">
    <property type="nucleotide sequence ID" value="NC_011653.1"/>
</dbReference>
<dbReference type="SMR" id="B7IE30"/>
<dbReference type="STRING" id="484019.THA_1826"/>
<dbReference type="KEGG" id="taf:THA_1826"/>
<dbReference type="eggNOG" id="COG0173">
    <property type="taxonomic scope" value="Bacteria"/>
</dbReference>
<dbReference type="HOGENOM" id="CLU_014330_3_2_0"/>
<dbReference type="OrthoDB" id="9802326at2"/>
<dbReference type="Proteomes" id="UP000002453">
    <property type="component" value="Chromosome"/>
</dbReference>
<dbReference type="GO" id="GO:0005737">
    <property type="term" value="C:cytoplasm"/>
    <property type="evidence" value="ECO:0007669"/>
    <property type="project" value="UniProtKB-SubCell"/>
</dbReference>
<dbReference type="GO" id="GO:0004815">
    <property type="term" value="F:aspartate-tRNA ligase activity"/>
    <property type="evidence" value="ECO:0007669"/>
    <property type="project" value="UniProtKB-UniRule"/>
</dbReference>
<dbReference type="GO" id="GO:0005524">
    <property type="term" value="F:ATP binding"/>
    <property type="evidence" value="ECO:0007669"/>
    <property type="project" value="UniProtKB-UniRule"/>
</dbReference>
<dbReference type="GO" id="GO:0003676">
    <property type="term" value="F:nucleic acid binding"/>
    <property type="evidence" value="ECO:0007669"/>
    <property type="project" value="InterPro"/>
</dbReference>
<dbReference type="GO" id="GO:0006422">
    <property type="term" value="P:aspartyl-tRNA aminoacylation"/>
    <property type="evidence" value="ECO:0007669"/>
    <property type="project" value="UniProtKB-UniRule"/>
</dbReference>
<dbReference type="CDD" id="cd00777">
    <property type="entry name" value="AspRS_core"/>
    <property type="match status" value="1"/>
</dbReference>
<dbReference type="CDD" id="cd04317">
    <property type="entry name" value="EcAspRS_like_N"/>
    <property type="match status" value="1"/>
</dbReference>
<dbReference type="Gene3D" id="3.30.930.10">
    <property type="entry name" value="Bira Bifunctional Protein, Domain 2"/>
    <property type="match status" value="1"/>
</dbReference>
<dbReference type="Gene3D" id="3.30.1360.30">
    <property type="entry name" value="GAD-like domain"/>
    <property type="match status" value="1"/>
</dbReference>
<dbReference type="Gene3D" id="2.40.50.140">
    <property type="entry name" value="Nucleic acid-binding proteins"/>
    <property type="match status" value="1"/>
</dbReference>
<dbReference type="HAMAP" id="MF_00044">
    <property type="entry name" value="Asp_tRNA_synth_type1"/>
    <property type="match status" value="1"/>
</dbReference>
<dbReference type="InterPro" id="IPR004364">
    <property type="entry name" value="Aa-tRNA-synt_II"/>
</dbReference>
<dbReference type="InterPro" id="IPR006195">
    <property type="entry name" value="aa-tRNA-synth_II"/>
</dbReference>
<dbReference type="InterPro" id="IPR045864">
    <property type="entry name" value="aa-tRNA-synth_II/BPL/LPL"/>
</dbReference>
<dbReference type="InterPro" id="IPR004524">
    <property type="entry name" value="Asp-tRNA-ligase_1"/>
</dbReference>
<dbReference type="InterPro" id="IPR047089">
    <property type="entry name" value="Asp-tRNA-ligase_1_N"/>
</dbReference>
<dbReference type="InterPro" id="IPR002312">
    <property type="entry name" value="Asp/Asn-tRNA-synth_IIb"/>
</dbReference>
<dbReference type="InterPro" id="IPR047090">
    <property type="entry name" value="AspRS_core"/>
</dbReference>
<dbReference type="InterPro" id="IPR004115">
    <property type="entry name" value="GAD-like_sf"/>
</dbReference>
<dbReference type="InterPro" id="IPR029351">
    <property type="entry name" value="GAD_dom"/>
</dbReference>
<dbReference type="InterPro" id="IPR012340">
    <property type="entry name" value="NA-bd_OB-fold"/>
</dbReference>
<dbReference type="InterPro" id="IPR004365">
    <property type="entry name" value="NA-bd_OB_tRNA"/>
</dbReference>
<dbReference type="NCBIfam" id="TIGR00459">
    <property type="entry name" value="aspS_bact"/>
    <property type="match status" value="1"/>
</dbReference>
<dbReference type="NCBIfam" id="NF001750">
    <property type="entry name" value="PRK00476.1"/>
    <property type="match status" value="1"/>
</dbReference>
<dbReference type="PANTHER" id="PTHR22594:SF5">
    <property type="entry name" value="ASPARTATE--TRNA LIGASE, MITOCHONDRIAL"/>
    <property type="match status" value="1"/>
</dbReference>
<dbReference type="PANTHER" id="PTHR22594">
    <property type="entry name" value="ASPARTYL/LYSYL-TRNA SYNTHETASE"/>
    <property type="match status" value="1"/>
</dbReference>
<dbReference type="Pfam" id="PF02938">
    <property type="entry name" value="GAD"/>
    <property type="match status" value="1"/>
</dbReference>
<dbReference type="Pfam" id="PF00152">
    <property type="entry name" value="tRNA-synt_2"/>
    <property type="match status" value="1"/>
</dbReference>
<dbReference type="Pfam" id="PF01336">
    <property type="entry name" value="tRNA_anti-codon"/>
    <property type="match status" value="1"/>
</dbReference>
<dbReference type="PRINTS" id="PR01042">
    <property type="entry name" value="TRNASYNTHASP"/>
</dbReference>
<dbReference type="SUPFAM" id="SSF55681">
    <property type="entry name" value="Class II aaRS and biotin synthetases"/>
    <property type="match status" value="1"/>
</dbReference>
<dbReference type="SUPFAM" id="SSF55261">
    <property type="entry name" value="GAD domain-like"/>
    <property type="match status" value="1"/>
</dbReference>
<dbReference type="SUPFAM" id="SSF50249">
    <property type="entry name" value="Nucleic acid-binding proteins"/>
    <property type="match status" value="1"/>
</dbReference>
<dbReference type="PROSITE" id="PS50862">
    <property type="entry name" value="AA_TRNA_LIGASE_II"/>
    <property type="match status" value="1"/>
</dbReference>
<proteinExistence type="inferred from homology"/>
<protein>
    <recommendedName>
        <fullName evidence="1">Aspartate--tRNA ligase</fullName>
        <ecNumber evidence="1">6.1.1.12</ecNumber>
    </recommendedName>
    <alternativeName>
        <fullName evidence="1">Aspartyl-tRNA synthetase</fullName>
        <shortName evidence="1">AspRS</shortName>
    </alternativeName>
</protein>
<feature type="chain" id="PRO_1000199020" description="Aspartate--tRNA ligase">
    <location>
        <begin position="1"/>
        <end position="581"/>
    </location>
</feature>
<feature type="region of interest" description="Aspartate" evidence="1">
    <location>
        <begin position="194"/>
        <end position="197"/>
    </location>
</feature>
<feature type="binding site" evidence="1">
    <location>
        <position position="170"/>
    </location>
    <ligand>
        <name>L-aspartate</name>
        <dbReference type="ChEBI" id="CHEBI:29991"/>
    </ligand>
</feature>
<feature type="binding site" evidence="1">
    <location>
        <begin position="216"/>
        <end position="218"/>
    </location>
    <ligand>
        <name>ATP</name>
        <dbReference type="ChEBI" id="CHEBI:30616"/>
    </ligand>
</feature>
<feature type="binding site" evidence="1">
    <location>
        <position position="216"/>
    </location>
    <ligand>
        <name>L-aspartate</name>
        <dbReference type="ChEBI" id="CHEBI:29991"/>
    </ligand>
</feature>
<feature type="binding site" evidence="1">
    <location>
        <position position="225"/>
    </location>
    <ligand>
        <name>ATP</name>
        <dbReference type="ChEBI" id="CHEBI:30616"/>
    </ligand>
</feature>
<feature type="binding site" evidence="1">
    <location>
        <position position="440"/>
    </location>
    <ligand>
        <name>L-aspartate</name>
        <dbReference type="ChEBI" id="CHEBI:29991"/>
    </ligand>
</feature>
<feature type="binding site" evidence="1">
    <location>
        <position position="469"/>
    </location>
    <ligand>
        <name>ATP</name>
        <dbReference type="ChEBI" id="CHEBI:30616"/>
    </ligand>
</feature>
<feature type="binding site" evidence="1">
    <location>
        <position position="476"/>
    </location>
    <ligand>
        <name>L-aspartate</name>
        <dbReference type="ChEBI" id="CHEBI:29991"/>
    </ligand>
</feature>
<feature type="binding site" evidence="1">
    <location>
        <begin position="521"/>
        <end position="524"/>
    </location>
    <ligand>
        <name>ATP</name>
        <dbReference type="ChEBI" id="CHEBI:30616"/>
    </ligand>
</feature>